<keyword id="KW-0058">Aromatic hydrocarbons catabolism</keyword>
<keyword id="KW-0456">Lyase</keyword>
<keyword id="KW-0464">Manganese</keyword>
<keyword id="KW-0479">Metal-binding</keyword>
<reference key="1">
    <citation type="journal article" date="2008" name="Environ. Microbiol.">
        <title>The complete genome sequence of Moorella thermoacetica (f. Clostridium thermoaceticum).</title>
        <authorList>
            <person name="Pierce E."/>
            <person name="Xie G."/>
            <person name="Barabote R.D."/>
            <person name="Saunders E."/>
            <person name="Han C.S."/>
            <person name="Detter J.C."/>
            <person name="Richardson P."/>
            <person name="Brettin T.S."/>
            <person name="Das A."/>
            <person name="Ljungdahl L.G."/>
            <person name="Ragsdale S.W."/>
        </authorList>
    </citation>
    <scope>NUCLEOTIDE SEQUENCE [LARGE SCALE GENOMIC DNA]</scope>
    <source>
        <strain>ATCC 39073 / JCM 9320</strain>
    </source>
</reference>
<protein>
    <recommendedName>
        <fullName evidence="1">4-hydroxy-2-oxovalerate aldolase</fullName>
        <shortName evidence="1">HOA</shortName>
        <ecNumber evidence="1">4.1.3.39</ecNumber>
    </recommendedName>
    <alternativeName>
        <fullName evidence="1">4-hydroxy-2-keto-pentanoic acid aldolase</fullName>
    </alternativeName>
    <alternativeName>
        <fullName evidence="1">4-hydroxy-2-oxopentanoate aldolase</fullName>
    </alternativeName>
</protein>
<gene>
    <name type="ordered locus">Moth_1775</name>
</gene>
<feature type="chain" id="PRO_0000387843" description="4-hydroxy-2-oxovalerate aldolase">
    <location>
        <begin position="1"/>
        <end position="338"/>
    </location>
</feature>
<feature type="domain" description="Pyruvate carboxyltransferase" evidence="1">
    <location>
        <begin position="6"/>
        <end position="256"/>
    </location>
</feature>
<feature type="active site" description="Proton acceptor" evidence="1">
    <location>
        <position position="18"/>
    </location>
</feature>
<feature type="binding site" evidence="1">
    <location>
        <begin position="14"/>
        <end position="15"/>
    </location>
    <ligand>
        <name>substrate</name>
    </ligand>
</feature>
<feature type="binding site" evidence="1">
    <location>
        <position position="15"/>
    </location>
    <ligand>
        <name>Mn(2+)</name>
        <dbReference type="ChEBI" id="CHEBI:29035"/>
    </ligand>
</feature>
<feature type="binding site" evidence="1">
    <location>
        <position position="168"/>
    </location>
    <ligand>
        <name>substrate</name>
    </ligand>
</feature>
<feature type="binding site" evidence="1">
    <location>
        <position position="195"/>
    </location>
    <ligand>
        <name>Mn(2+)</name>
        <dbReference type="ChEBI" id="CHEBI:29035"/>
    </ligand>
</feature>
<feature type="binding site" evidence="1">
    <location>
        <position position="195"/>
    </location>
    <ligand>
        <name>substrate</name>
    </ligand>
</feature>
<feature type="binding site" evidence="1">
    <location>
        <position position="197"/>
    </location>
    <ligand>
        <name>Mn(2+)</name>
        <dbReference type="ChEBI" id="CHEBI:29035"/>
    </ligand>
</feature>
<feature type="binding site" evidence="1">
    <location>
        <position position="286"/>
    </location>
    <ligand>
        <name>substrate</name>
    </ligand>
</feature>
<feature type="site" description="Transition state stabilizer" evidence="1">
    <location>
        <position position="14"/>
    </location>
</feature>
<accession>Q2RHL3</accession>
<evidence type="ECO:0000255" key="1">
    <source>
        <dbReference type="HAMAP-Rule" id="MF_01656"/>
    </source>
</evidence>
<name>HOA_MOOTA</name>
<sequence length="338" mass="35714">MSARSIHIVDTTLRDGSHAVSHQFTAEQIAAIAGGLDAAGVEYIEVSHGDGLAGSSYNYGWAALGDEEMLKAASAAIKKGKLTVLLLPGIGTVEDLKMAADCGAKVVRVATHVTEADIGEQHIGMAKKLGMMAVGFLMMCHMAPPEKVVEQAKLFESYGADYINIADSAGAMLPEDVKARVGAVVEAVKVPVGFHAHNNLTMATANALAAVEAGATFLDGACRGLGAGAGNAQTEALVGVLDKLGYRTGVDFYKVMDVAEDIVEPIMHRPQVVRNAPLMLGYAGVYSSFLLHTYRAAEKFNLDPRDILVELGRRRMVGGQEDMIVDVAYQLAQKRGGN</sequence>
<proteinExistence type="inferred from homology"/>
<dbReference type="EC" id="4.1.3.39" evidence="1"/>
<dbReference type="EMBL" id="CP000232">
    <property type="protein sequence ID" value="ABC20076.1"/>
    <property type="molecule type" value="Genomic_DNA"/>
</dbReference>
<dbReference type="RefSeq" id="YP_430619.1">
    <property type="nucleotide sequence ID" value="NC_007644.1"/>
</dbReference>
<dbReference type="SMR" id="Q2RHL3"/>
<dbReference type="STRING" id="264732.Moth_1775"/>
<dbReference type="EnsemblBacteria" id="ABC20076">
    <property type="protein sequence ID" value="ABC20076"/>
    <property type="gene ID" value="Moth_1775"/>
</dbReference>
<dbReference type="KEGG" id="mta:Moth_1775"/>
<dbReference type="PATRIC" id="fig|264732.11.peg.1926"/>
<dbReference type="eggNOG" id="COG0119">
    <property type="taxonomic scope" value="Bacteria"/>
</dbReference>
<dbReference type="HOGENOM" id="CLU_049173_0_0_9"/>
<dbReference type="OrthoDB" id="9804858at2"/>
<dbReference type="GO" id="GO:0003852">
    <property type="term" value="F:2-isopropylmalate synthase activity"/>
    <property type="evidence" value="ECO:0007669"/>
    <property type="project" value="TreeGrafter"/>
</dbReference>
<dbReference type="GO" id="GO:0008701">
    <property type="term" value="F:4-hydroxy-2-oxovalerate aldolase activity"/>
    <property type="evidence" value="ECO:0007669"/>
    <property type="project" value="UniProtKB-UniRule"/>
</dbReference>
<dbReference type="GO" id="GO:0030145">
    <property type="term" value="F:manganese ion binding"/>
    <property type="evidence" value="ECO:0007669"/>
    <property type="project" value="UniProtKB-UniRule"/>
</dbReference>
<dbReference type="GO" id="GO:0009056">
    <property type="term" value="P:catabolic process"/>
    <property type="evidence" value="ECO:0007669"/>
    <property type="project" value="UniProtKB-KW"/>
</dbReference>
<dbReference type="GO" id="GO:0009098">
    <property type="term" value="P:L-leucine biosynthetic process"/>
    <property type="evidence" value="ECO:0007669"/>
    <property type="project" value="TreeGrafter"/>
</dbReference>
<dbReference type="CDD" id="cd07943">
    <property type="entry name" value="DRE_TIM_HOA"/>
    <property type="match status" value="1"/>
</dbReference>
<dbReference type="Gene3D" id="1.10.8.60">
    <property type="match status" value="1"/>
</dbReference>
<dbReference type="Gene3D" id="3.20.20.70">
    <property type="entry name" value="Aldolase class I"/>
    <property type="match status" value="1"/>
</dbReference>
<dbReference type="HAMAP" id="MF_01656">
    <property type="entry name" value="HOA"/>
    <property type="match status" value="1"/>
</dbReference>
<dbReference type="InterPro" id="IPR050073">
    <property type="entry name" value="2-IPM_HCS-like"/>
</dbReference>
<dbReference type="InterPro" id="IPR017629">
    <property type="entry name" value="4OH_2_O-val_aldolase"/>
</dbReference>
<dbReference type="InterPro" id="IPR013785">
    <property type="entry name" value="Aldolase_TIM"/>
</dbReference>
<dbReference type="InterPro" id="IPR012425">
    <property type="entry name" value="DmpG_comm"/>
</dbReference>
<dbReference type="InterPro" id="IPR035685">
    <property type="entry name" value="DRE_TIM_HOA"/>
</dbReference>
<dbReference type="InterPro" id="IPR000891">
    <property type="entry name" value="PYR_CT"/>
</dbReference>
<dbReference type="NCBIfam" id="TIGR03217">
    <property type="entry name" value="4OH_2_O_val_ald"/>
    <property type="match status" value="1"/>
</dbReference>
<dbReference type="NCBIfam" id="NF006049">
    <property type="entry name" value="PRK08195.1"/>
    <property type="match status" value="1"/>
</dbReference>
<dbReference type="PANTHER" id="PTHR10277:SF9">
    <property type="entry name" value="2-ISOPROPYLMALATE SYNTHASE 1, CHLOROPLASTIC-RELATED"/>
    <property type="match status" value="1"/>
</dbReference>
<dbReference type="PANTHER" id="PTHR10277">
    <property type="entry name" value="HOMOCITRATE SYNTHASE-RELATED"/>
    <property type="match status" value="1"/>
</dbReference>
<dbReference type="Pfam" id="PF07836">
    <property type="entry name" value="DmpG_comm"/>
    <property type="match status" value="1"/>
</dbReference>
<dbReference type="Pfam" id="PF00682">
    <property type="entry name" value="HMGL-like"/>
    <property type="match status" value="1"/>
</dbReference>
<dbReference type="SUPFAM" id="SSF51569">
    <property type="entry name" value="Aldolase"/>
    <property type="match status" value="1"/>
</dbReference>
<dbReference type="SUPFAM" id="SSF89000">
    <property type="entry name" value="post-HMGL domain-like"/>
    <property type="match status" value="1"/>
</dbReference>
<dbReference type="PROSITE" id="PS50991">
    <property type="entry name" value="PYR_CT"/>
    <property type="match status" value="1"/>
</dbReference>
<comment type="catalytic activity">
    <reaction evidence="1">
        <text>(S)-4-hydroxy-2-oxopentanoate = acetaldehyde + pyruvate</text>
        <dbReference type="Rhea" id="RHEA:22624"/>
        <dbReference type="ChEBI" id="CHEBI:15343"/>
        <dbReference type="ChEBI" id="CHEBI:15361"/>
        <dbReference type="ChEBI" id="CHEBI:73143"/>
        <dbReference type="EC" id="4.1.3.39"/>
    </reaction>
</comment>
<comment type="similarity">
    <text evidence="1">Belongs to the 4-hydroxy-2-oxovalerate aldolase family.</text>
</comment>
<organism>
    <name type="scientific">Moorella thermoacetica (strain ATCC 39073 / JCM 9320)</name>
    <dbReference type="NCBI Taxonomy" id="264732"/>
    <lineage>
        <taxon>Bacteria</taxon>
        <taxon>Bacillati</taxon>
        <taxon>Bacillota</taxon>
        <taxon>Clostridia</taxon>
        <taxon>Moorellales</taxon>
        <taxon>Moorellaceae</taxon>
        <taxon>Moorella</taxon>
    </lineage>
</organism>